<sequence length="306" mass="34884">MIMVQGEVSGKKYTEPFSKGVLARSLTRAEMDPNRAYTFASRIEAHLKKNKVDLITIEELVEIVSEHLRKEDPEVAEKYMLWRKIRQCKEPLIILIGGASGVGTSSIAFEVANRLGIRNMISTDMIREVMRKIVSRELLPSIYESSYTAYQSLRIPPPPELDEVLIGFRDHVESVSIGVEAVIERALTEGISIVIEGVHIVPGFIREDLVNKENVAMFVLTVSDENVHKGRFYSRCRQMWARRPLKRYISYFWAIRRIHRYIENQARKHGVPVIENIDVVTTIDSIIKSLTKTTVKGGEKGAEKTE</sequence>
<gene>
    <name evidence="1" type="primary">pgk2</name>
    <name type="ordered locus">MTH_1883</name>
</gene>
<name>PGK2_METTH</name>
<protein>
    <recommendedName>
        <fullName evidence="1">2-phosphoglycerate kinase</fullName>
        <shortName evidence="1">2PGK</shortName>
        <ecNumber evidence="1">2.7.2.16</ecNumber>
    </recommendedName>
</protein>
<reference key="1">
    <citation type="journal article" date="1997" name="J. Bacteriol.">
        <title>Complete genome sequence of Methanobacterium thermoautotrophicum deltaH: functional analysis and comparative genomics.</title>
        <authorList>
            <person name="Smith D.R."/>
            <person name="Doucette-Stamm L.A."/>
            <person name="Deloughery C."/>
            <person name="Lee H.-M."/>
            <person name="Dubois J."/>
            <person name="Aldredge T."/>
            <person name="Bashirzadeh R."/>
            <person name="Blakely D."/>
            <person name="Cook R."/>
            <person name="Gilbert K."/>
            <person name="Harrison D."/>
            <person name="Hoang L."/>
            <person name="Keagle P."/>
            <person name="Lumm W."/>
            <person name="Pothier B."/>
            <person name="Qiu D."/>
            <person name="Spadafora R."/>
            <person name="Vicare R."/>
            <person name="Wang Y."/>
            <person name="Wierzbowski J."/>
            <person name="Gibson R."/>
            <person name="Jiwani N."/>
            <person name="Caruso A."/>
            <person name="Bush D."/>
            <person name="Safer H."/>
            <person name="Patwell D."/>
            <person name="Prabhakar S."/>
            <person name="McDougall S."/>
            <person name="Shimer G."/>
            <person name="Goyal A."/>
            <person name="Pietrovski S."/>
            <person name="Church G.M."/>
            <person name="Daniels C.J."/>
            <person name="Mao J.-I."/>
            <person name="Rice P."/>
            <person name="Noelling J."/>
            <person name="Reeve J.N."/>
        </authorList>
    </citation>
    <scope>NUCLEOTIDE SEQUENCE [LARGE SCALE GENOMIC DNA]</scope>
    <source>
        <strain>ATCC 29096 / DSM 1053 / JCM 10044 / NBRC 100330 / Delta H</strain>
    </source>
</reference>
<dbReference type="EC" id="2.7.2.16" evidence="1"/>
<dbReference type="EMBL" id="AE000666">
    <property type="protein sequence ID" value="AAB86349.1"/>
    <property type="molecule type" value="Genomic_DNA"/>
</dbReference>
<dbReference type="PIR" id="A69119">
    <property type="entry name" value="A69119"/>
</dbReference>
<dbReference type="RefSeq" id="WP_010877485.1">
    <property type="nucleotide sequence ID" value="NC_000916.1"/>
</dbReference>
<dbReference type="STRING" id="187420.MTH_1883"/>
<dbReference type="PaxDb" id="187420-MTH_1883"/>
<dbReference type="EnsemblBacteria" id="AAB86349">
    <property type="protein sequence ID" value="AAB86349"/>
    <property type="gene ID" value="MTH_1883"/>
</dbReference>
<dbReference type="KEGG" id="mth:MTH_1883"/>
<dbReference type="PATRIC" id="fig|187420.15.peg.1838"/>
<dbReference type="HOGENOM" id="CLU_848909_0_0_2"/>
<dbReference type="InParanoid" id="O27911"/>
<dbReference type="UniPathway" id="UPA00551">
    <property type="reaction ID" value="UER00609"/>
</dbReference>
<dbReference type="Proteomes" id="UP000005223">
    <property type="component" value="Chromosome"/>
</dbReference>
<dbReference type="GO" id="GO:0005524">
    <property type="term" value="F:ATP binding"/>
    <property type="evidence" value="ECO:0007669"/>
    <property type="project" value="UniProtKB-KW"/>
</dbReference>
<dbReference type="GO" id="GO:0016301">
    <property type="term" value="F:kinase activity"/>
    <property type="evidence" value="ECO:0007669"/>
    <property type="project" value="UniProtKB-KW"/>
</dbReference>
<dbReference type="GO" id="GO:0016774">
    <property type="term" value="F:phosphotransferase activity, carboxyl group as acceptor"/>
    <property type="evidence" value="ECO:0007669"/>
    <property type="project" value="UniProtKB-UniRule"/>
</dbReference>
<dbReference type="Gene3D" id="3.40.50.300">
    <property type="entry name" value="P-loop containing nucleotide triphosphate hydrolases"/>
    <property type="match status" value="1"/>
</dbReference>
<dbReference type="HAMAP" id="MF_00769">
    <property type="entry name" value="2PGK"/>
    <property type="match status" value="1"/>
</dbReference>
<dbReference type="InterPro" id="IPR020872">
    <property type="entry name" value="2PKG"/>
</dbReference>
<dbReference type="InterPro" id="IPR005144">
    <property type="entry name" value="ATP-cone_dom"/>
</dbReference>
<dbReference type="InterPro" id="IPR027417">
    <property type="entry name" value="P-loop_NTPase"/>
</dbReference>
<dbReference type="NCBIfam" id="NF003259">
    <property type="entry name" value="PRK04220.1"/>
    <property type="match status" value="1"/>
</dbReference>
<dbReference type="PANTHER" id="PTHR33477">
    <property type="entry name" value="P-LOOP NTPASE DOMAIN-CONTAINING PROTEIN LPA1 HOMOLOG 1"/>
    <property type="match status" value="1"/>
</dbReference>
<dbReference type="PANTHER" id="PTHR33477:SF3">
    <property type="entry name" value="P-LOOP NTPASE DOMAIN-CONTAINING PROTEIN LPA1 HOMOLOG 1"/>
    <property type="match status" value="1"/>
</dbReference>
<dbReference type="Pfam" id="PF03477">
    <property type="entry name" value="ATP-cone"/>
    <property type="match status" value="1"/>
</dbReference>
<dbReference type="SUPFAM" id="SSF52540">
    <property type="entry name" value="P-loop containing nucleoside triphosphate hydrolases"/>
    <property type="match status" value="1"/>
</dbReference>
<dbReference type="PROSITE" id="PS51161">
    <property type="entry name" value="ATP_CONE"/>
    <property type="match status" value="1"/>
</dbReference>
<accession>O27911</accession>
<proteinExistence type="inferred from homology"/>
<evidence type="ECO:0000255" key="1">
    <source>
        <dbReference type="HAMAP-Rule" id="MF_00769"/>
    </source>
</evidence>
<organism>
    <name type="scientific">Methanothermobacter thermautotrophicus (strain ATCC 29096 / DSM 1053 / JCM 10044 / NBRC 100330 / Delta H)</name>
    <name type="common">Methanobacterium thermoautotrophicum</name>
    <dbReference type="NCBI Taxonomy" id="187420"/>
    <lineage>
        <taxon>Archaea</taxon>
        <taxon>Methanobacteriati</taxon>
        <taxon>Methanobacteriota</taxon>
        <taxon>Methanomada group</taxon>
        <taxon>Methanobacteria</taxon>
        <taxon>Methanobacteriales</taxon>
        <taxon>Methanobacteriaceae</taxon>
        <taxon>Methanothermobacter</taxon>
    </lineage>
</organism>
<feature type="chain" id="PRO_0000156148" description="2-phosphoglycerate kinase">
    <location>
        <begin position="1"/>
        <end position="306"/>
    </location>
</feature>
<feature type="domain" description="ATP-cone" evidence="1">
    <location>
        <begin position="1"/>
        <end position="90"/>
    </location>
</feature>
<keyword id="KW-0067">ATP-binding</keyword>
<keyword id="KW-0418">Kinase</keyword>
<keyword id="KW-0547">Nucleotide-binding</keyword>
<keyword id="KW-1185">Reference proteome</keyword>
<keyword id="KW-0808">Transferase</keyword>
<comment type="function">
    <text evidence="1">Catalyzes the phosphorylation of 2-phosphoglycerate to 2,3-diphosphoglycerate. Involved in the biosynthesis of cyclic 2,3-bisphosphoglycerate, a thermoprotectant.</text>
</comment>
<comment type="catalytic activity">
    <reaction evidence="1">
        <text>(2R)-2-phosphoglycerate + ATP = (2R)-2,3-bisphosphoglycerate + ADP + H(+)</text>
        <dbReference type="Rhea" id="RHEA:42408"/>
        <dbReference type="ChEBI" id="CHEBI:15378"/>
        <dbReference type="ChEBI" id="CHEBI:30616"/>
        <dbReference type="ChEBI" id="CHEBI:58248"/>
        <dbReference type="ChEBI" id="CHEBI:58289"/>
        <dbReference type="ChEBI" id="CHEBI:456216"/>
        <dbReference type="EC" id="2.7.2.16"/>
    </reaction>
</comment>
<comment type="cofactor">
    <cofactor evidence="1">
        <name>a divalent metal cation</name>
        <dbReference type="ChEBI" id="CHEBI:60240"/>
    </cofactor>
</comment>
<comment type="pathway">
    <text evidence="1">Thermoadapter biosynthesis; cyclic 2,3-diphosphoglycerate biosynthesis; cyclic 2,3-diphosphoglycerate from 2-phospho-D-glycerate: step 1/2.</text>
</comment>
<comment type="similarity">
    <text evidence="1">Belongs to the 2-phosphoglycerate kinase family.</text>
</comment>